<feature type="chain" id="PRO_0000155512" description="Ribosomal RNA large subunit methyltransferase E">
    <location>
        <begin position="1"/>
        <end position="206"/>
    </location>
</feature>
<feature type="active site" description="Proton acceptor" evidence="1">
    <location>
        <position position="162"/>
    </location>
</feature>
<feature type="binding site" evidence="1">
    <location>
        <position position="61"/>
    </location>
    <ligand>
        <name>S-adenosyl-L-methionine</name>
        <dbReference type="ChEBI" id="CHEBI:59789"/>
    </ligand>
</feature>
<feature type="binding site" evidence="1">
    <location>
        <position position="63"/>
    </location>
    <ligand>
        <name>S-adenosyl-L-methionine</name>
        <dbReference type="ChEBI" id="CHEBI:59789"/>
    </ligand>
</feature>
<feature type="binding site" evidence="1">
    <location>
        <position position="81"/>
    </location>
    <ligand>
        <name>S-adenosyl-L-methionine</name>
        <dbReference type="ChEBI" id="CHEBI:59789"/>
    </ligand>
</feature>
<feature type="binding site" evidence="1">
    <location>
        <position position="97"/>
    </location>
    <ligand>
        <name>S-adenosyl-L-methionine</name>
        <dbReference type="ChEBI" id="CHEBI:59789"/>
    </ligand>
</feature>
<feature type="binding site" evidence="1">
    <location>
        <position position="122"/>
    </location>
    <ligand>
        <name>S-adenosyl-L-methionine</name>
        <dbReference type="ChEBI" id="CHEBI:59789"/>
    </ligand>
</feature>
<comment type="function">
    <text evidence="1">Specifically methylates the uridine in position 2552 of 23S rRNA at the 2'-O position of the ribose in the fully assembled 50S ribosomal subunit.</text>
</comment>
<comment type="catalytic activity">
    <reaction evidence="1">
        <text>uridine(2552) in 23S rRNA + S-adenosyl-L-methionine = 2'-O-methyluridine(2552) in 23S rRNA + S-adenosyl-L-homocysteine + H(+)</text>
        <dbReference type="Rhea" id="RHEA:42720"/>
        <dbReference type="Rhea" id="RHEA-COMP:10202"/>
        <dbReference type="Rhea" id="RHEA-COMP:10203"/>
        <dbReference type="ChEBI" id="CHEBI:15378"/>
        <dbReference type="ChEBI" id="CHEBI:57856"/>
        <dbReference type="ChEBI" id="CHEBI:59789"/>
        <dbReference type="ChEBI" id="CHEBI:65315"/>
        <dbReference type="ChEBI" id="CHEBI:74478"/>
        <dbReference type="EC" id="2.1.1.166"/>
    </reaction>
</comment>
<comment type="subcellular location">
    <subcellularLocation>
        <location evidence="1">Cytoplasm</location>
    </subcellularLocation>
</comment>
<comment type="similarity">
    <text evidence="1">Belongs to the class I-like SAM-binding methyltransferase superfamily. RNA methyltransferase RlmE family.</text>
</comment>
<accession>Q9JQX5</accession>
<accession>A1IR47</accession>
<protein>
    <recommendedName>
        <fullName evidence="1">Ribosomal RNA large subunit methyltransferase E</fullName>
        <ecNumber evidence="1">2.1.1.166</ecNumber>
    </recommendedName>
    <alternativeName>
        <fullName evidence="1">23S rRNA Um2552 methyltransferase</fullName>
    </alternativeName>
    <alternativeName>
        <fullName evidence="1">rRNA (uridine-2'-O-)-methyltransferase</fullName>
    </alternativeName>
</protein>
<reference key="1">
    <citation type="journal article" date="2000" name="Nature">
        <title>Complete DNA sequence of a serogroup A strain of Neisseria meningitidis Z2491.</title>
        <authorList>
            <person name="Parkhill J."/>
            <person name="Achtman M."/>
            <person name="James K.D."/>
            <person name="Bentley S.D."/>
            <person name="Churcher C.M."/>
            <person name="Klee S.R."/>
            <person name="Morelli G."/>
            <person name="Basham D."/>
            <person name="Brown D."/>
            <person name="Chillingworth T."/>
            <person name="Davies R.M."/>
            <person name="Davis P."/>
            <person name="Devlin K."/>
            <person name="Feltwell T."/>
            <person name="Hamlin N."/>
            <person name="Holroyd S."/>
            <person name="Jagels K."/>
            <person name="Leather S."/>
            <person name="Moule S."/>
            <person name="Mungall K.L."/>
            <person name="Quail M.A."/>
            <person name="Rajandream M.A."/>
            <person name="Rutherford K.M."/>
            <person name="Simmonds M."/>
            <person name="Skelton J."/>
            <person name="Whitehead S."/>
            <person name="Spratt B.G."/>
            <person name="Barrell B.G."/>
        </authorList>
    </citation>
    <scope>NUCLEOTIDE SEQUENCE [LARGE SCALE GENOMIC DNA]</scope>
    <source>
        <strain>DSM 15465 / Z2491</strain>
    </source>
</reference>
<dbReference type="EC" id="2.1.1.166" evidence="1"/>
<dbReference type="EMBL" id="AL157959">
    <property type="protein sequence ID" value="CAM08231.1"/>
    <property type="molecule type" value="Genomic_DNA"/>
</dbReference>
<dbReference type="PIR" id="F81157">
    <property type="entry name" value="F81157"/>
</dbReference>
<dbReference type="RefSeq" id="WP_002213963.1">
    <property type="nucleotide sequence ID" value="NC_003116.1"/>
</dbReference>
<dbReference type="SMR" id="Q9JQX5"/>
<dbReference type="EnsemblBacteria" id="CAM08231">
    <property type="protein sequence ID" value="CAM08231"/>
    <property type="gene ID" value="NMA1008"/>
</dbReference>
<dbReference type="KEGG" id="nma:NMA1008"/>
<dbReference type="HOGENOM" id="CLU_009422_4_0_4"/>
<dbReference type="Proteomes" id="UP000000626">
    <property type="component" value="Chromosome"/>
</dbReference>
<dbReference type="GO" id="GO:0005737">
    <property type="term" value="C:cytoplasm"/>
    <property type="evidence" value="ECO:0007669"/>
    <property type="project" value="UniProtKB-SubCell"/>
</dbReference>
<dbReference type="GO" id="GO:0008650">
    <property type="term" value="F:rRNA (uridine-2'-O-)-methyltransferase activity"/>
    <property type="evidence" value="ECO:0007669"/>
    <property type="project" value="UniProtKB-UniRule"/>
</dbReference>
<dbReference type="FunFam" id="3.40.50.150:FF:000005">
    <property type="entry name" value="Ribosomal RNA large subunit methyltransferase E"/>
    <property type="match status" value="1"/>
</dbReference>
<dbReference type="Gene3D" id="3.40.50.150">
    <property type="entry name" value="Vaccinia Virus protein VP39"/>
    <property type="match status" value="1"/>
</dbReference>
<dbReference type="HAMAP" id="MF_01547">
    <property type="entry name" value="RNA_methyltr_E"/>
    <property type="match status" value="1"/>
</dbReference>
<dbReference type="InterPro" id="IPR050082">
    <property type="entry name" value="RNA_methyltr_RlmE"/>
</dbReference>
<dbReference type="InterPro" id="IPR002877">
    <property type="entry name" value="RNA_MeTrfase_FtsJ_dom"/>
</dbReference>
<dbReference type="InterPro" id="IPR015507">
    <property type="entry name" value="rRNA-MeTfrase_E"/>
</dbReference>
<dbReference type="InterPro" id="IPR029063">
    <property type="entry name" value="SAM-dependent_MTases_sf"/>
</dbReference>
<dbReference type="PANTHER" id="PTHR10920">
    <property type="entry name" value="RIBOSOMAL RNA METHYLTRANSFERASE"/>
    <property type="match status" value="1"/>
</dbReference>
<dbReference type="PANTHER" id="PTHR10920:SF18">
    <property type="entry name" value="RRNA METHYLTRANSFERASE 2, MITOCHONDRIAL"/>
    <property type="match status" value="1"/>
</dbReference>
<dbReference type="Pfam" id="PF01728">
    <property type="entry name" value="FtsJ"/>
    <property type="match status" value="1"/>
</dbReference>
<dbReference type="PIRSF" id="PIRSF005461">
    <property type="entry name" value="23S_rRNA_mtase"/>
    <property type="match status" value="1"/>
</dbReference>
<dbReference type="SUPFAM" id="SSF53335">
    <property type="entry name" value="S-adenosyl-L-methionine-dependent methyltransferases"/>
    <property type="match status" value="1"/>
</dbReference>
<proteinExistence type="inferred from homology"/>
<keyword id="KW-0963">Cytoplasm</keyword>
<keyword id="KW-0489">Methyltransferase</keyword>
<keyword id="KW-0698">rRNA processing</keyword>
<keyword id="KW-0949">S-adenosyl-L-methionine</keyword>
<keyword id="KW-0808">Transferase</keyword>
<name>RLME_NEIMA</name>
<evidence type="ECO:0000255" key="1">
    <source>
        <dbReference type="HAMAP-Rule" id="MF_01547"/>
    </source>
</evidence>
<sequence length="206" mass="22721">MAVRSKSSKAWLHEHVNDHYVHMAQKDGYRARAAYKLLEINEKDKLIKPGTVLADLGSAPGSWSQVAAKLTGTSGAVFALDILPMEAIGGVSFIQGDFRENDVLAQFETLLDNRPLDLVICDMAPNMSGNAVSDQARSFYLCELALDFASQHLKTGGSFLVKVFQGAGYQEYMAAMREIFGTVQTRKPEASRNRSSEIYLLGKNKR</sequence>
<gene>
    <name evidence="1" type="primary">rlmE</name>
    <name evidence="1" type="synonym">ftsJ</name>
    <name evidence="1" type="synonym">rrmJ</name>
    <name type="ordered locus">NMA1008</name>
</gene>
<organism>
    <name type="scientific">Neisseria meningitidis serogroup A / serotype 4A (strain DSM 15465 / Z2491)</name>
    <dbReference type="NCBI Taxonomy" id="122587"/>
    <lineage>
        <taxon>Bacteria</taxon>
        <taxon>Pseudomonadati</taxon>
        <taxon>Pseudomonadota</taxon>
        <taxon>Betaproteobacteria</taxon>
        <taxon>Neisseriales</taxon>
        <taxon>Neisseriaceae</taxon>
        <taxon>Neisseria</taxon>
    </lineage>
</organism>